<reference key="1">
    <citation type="journal article" date="1990" name="Virology">
        <title>The divergence between two oncogenic Herpesvirus saimiri strains in a genomic region related to the transforming phenotype.</title>
        <authorList>
            <person name="Biesinger B."/>
            <person name="Trimble J.J."/>
            <person name="Desrosiers R.C."/>
            <person name="Fleckenstein B."/>
        </authorList>
    </citation>
    <scope>NUCLEOTIDE SEQUENCE [GENOMIC DNA]</scope>
</reference>
<organismHost>
    <name type="scientific">Saimiri sciureus</name>
    <name type="common">Common squirrel monkey</name>
    <dbReference type="NCBI Taxonomy" id="9521"/>
</organismHost>
<gene>
    <name type="primary">DHFR</name>
    <name type="synonym">2</name>
</gene>
<sequence length="213" mass="24577">MVLLLNCIVAVDQNMGIGKKGHLPWPLLINDFKYFQRMTTSSVKNKQNLVIMGKNTWFSIPEKNRPLKDRINLVLSKKLKEIPHGAHFLARSLNDALKLIEQPELVNKVDRVWIIGGSSVYKDAMNYSSHLKLFVTRIMQSFETDTFFPEIDLKNYKLLIEYPGVPSNTQEEKGIKYKFEVYEKIVNTFLFKSHAGLTCSVKPKEASYDFELS</sequence>
<protein>
    <recommendedName>
        <fullName>Viral dihydrofolate reductase</fullName>
        <shortName>vDHFR</shortName>
        <ecNumber>1.5.1.3</ecNumber>
    </recommendedName>
</protein>
<organism>
    <name type="scientific">Saimiriine herpesvirus 2 (strain 488)</name>
    <name type="common">SaHV-2</name>
    <name type="synonym">Herpesvirus saimiri</name>
    <dbReference type="NCBI Taxonomy" id="10384"/>
    <lineage>
        <taxon>Viruses</taxon>
        <taxon>Duplodnaviria</taxon>
        <taxon>Heunggongvirae</taxon>
        <taxon>Peploviricota</taxon>
        <taxon>Herviviricetes</taxon>
        <taxon>Herpesvirales</taxon>
        <taxon>Orthoherpesviridae</taxon>
        <taxon>Gammaherpesvirinae</taxon>
        <taxon>Rhadinovirus</taxon>
        <taxon>Rhadinovirus saimiriinegamma2</taxon>
        <taxon>Saimiriine herpesvirus 2</taxon>
    </lineage>
</organism>
<evidence type="ECO:0000250" key="1"/>
<evidence type="ECO:0000255" key="2">
    <source>
        <dbReference type="PROSITE-ProRule" id="PRU00660"/>
    </source>
</evidence>
<evidence type="ECO:0000305" key="3"/>
<accession>P22573</accession>
<comment type="function">
    <text evidence="1">Key enzyme in folate metabolism. Catalyzes an essential reaction for de novo glycine and purine synthesis, and for DNA precursor synthesis (By similarity).</text>
</comment>
<comment type="catalytic activity">
    <reaction evidence="2">
        <text>(6S)-5,6,7,8-tetrahydrofolate + NADP(+) = 7,8-dihydrofolate + NADPH + H(+)</text>
        <dbReference type="Rhea" id="RHEA:15009"/>
        <dbReference type="ChEBI" id="CHEBI:15378"/>
        <dbReference type="ChEBI" id="CHEBI:57451"/>
        <dbReference type="ChEBI" id="CHEBI:57453"/>
        <dbReference type="ChEBI" id="CHEBI:57783"/>
        <dbReference type="ChEBI" id="CHEBI:58349"/>
        <dbReference type="EC" id="1.5.1.3"/>
    </reaction>
</comment>
<comment type="pathway">
    <text>Cofactor biosynthesis; tetrahydrofolate biosynthesis; 5,6,7,8-tetrahydrofolate from 7,8-dihydrofolate: step 1/1.</text>
</comment>
<comment type="similarity">
    <text evidence="3">Belongs to the dihydrofolate reductase family.</text>
</comment>
<name>DYR_SHV2C</name>
<dbReference type="EC" id="1.5.1.3"/>
<dbReference type="EMBL" id="M55264">
    <property type="protein sequence ID" value="AAA72932.1"/>
    <property type="molecule type" value="Genomic_DNA"/>
</dbReference>
<dbReference type="SMR" id="P22573"/>
<dbReference type="UniPathway" id="UPA00077">
    <property type="reaction ID" value="UER00158"/>
</dbReference>
<dbReference type="GO" id="GO:0004146">
    <property type="term" value="F:dihydrofolate reductase activity"/>
    <property type="evidence" value="ECO:0007669"/>
    <property type="project" value="UniProtKB-EC"/>
</dbReference>
<dbReference type="GO" id="GO:0050661">
    <property type="term" value="F:NADP binding"/>
    <property type="evidence" value="ECO:0007669"/>
    <property type="project" value="InterPro"/>
</dbReference>
<dbReference type="GO" id="GO:0046452">
    <property type="term" value="P:dihydrofolate metabolic process"/>
    <property type="evidence" value="ECO:0007669"/>
    <property type="project" value="TreeGrafter"/>
</dbReference>
<dbReference type="GO" id="GO:0046655">
    <property type="term" value="P:folic acid metabolic process"/>
    <property type="evidence" value="ECO:0007669"/>
    <property type="project" value="TreeGrafter"/>
</dbReference>
<dbReference type="GO" id="GO:0006730">
    <property type="term" value="P:one-carbon metabolic process"/>
    <property type="evidence" value="ECO:0007669"/>
    <property type="project" value="UniProtKB-KW"/>
</dbReference>
<dbReference type="GO" id="GO:0046654">
    <property type="term" value="P:tetrahydrofolate biosynthetic process"/>
    <property type="evidence" value="ECO:0007669"/>
    <property type="project" value="UniProtKB-UniPathway"/>
</dbReference>
<dbReference type="CDD" id="cd00209">
    <property type="entry name" value="DHFR"/>
    <property type="match status" value="1"/>
</dbReference>
<dbReference type="FunFam" id="3.40.430.10:FF:000002">
    <property type="entry name" value="Dihydrofolate reductase"/>
    <property type="match status" value="1"/>
</dbReference>
<dbReference type="Gene3D" id="3.40.430.10">
    <property type="entry name" value="Dihydrofolate Reductase, subunit A"/>
    <property type="match status" value="1"/>
</dbReference>
<dbReference type="InterPro" id="IPR012259">
    <property type="entry name" value="DHFR"/>
</dbReference>
<dbReference type="InterPro" id="IPR024072">
    <property type="entry name" value="DHFR-like_dom_sf"/>
</dbReference>
<dbReference type="InterPro" id="IPR017925">
    <property type="entry name" value="DHFR_CS"/>
</dbReference>
<dbReference type="InterPro" id="IPR001796">
    <property type="entry name" value="DHFR_dom"/>
</dbReference>
<dbReference type="PANTHER" id="PTHR48069">
    <property type="entry name" value="DIHYDROFOLATE REDUCTASE"/>
    <property type="match status" value="1"/>
</dbReference>
<dbReference type="PANTHER" id="PTHR48069:SF6">
    <property type="entry name" value="DIHYDROFOLATE REDUCTASE"/>
    <property type="match status" value="1"/>
</dbReference>
<dbReference type="Pfam" id="PF00186">
    <property type="entry name" value="DHFR_1"/>
    <property type="match status" value="1"/>
</dbReference>
<dbReference type="PRINTS" id="PR00070">
    <property type="entry name" value="DHFR"/>
</dbReference>
<dbReference type="SUPFAM" id="SSF53597">
    <property type="entry name" value="Dihydrofolate reductase-like"/>
    <property type="match status" value="1"/>
</dbReference>
<dbReference type="PROSITE" id="PS00075">
    <property type="entry name" value="DHFR_1"/>
    <property type="match status" value="1"/>
</dbReference>
<dbReference type="PROSITE" id="PS51330">
    <property type="entry name" value="DHFR_2"/>
    <property type="match status" value="1"/>
</dbReference>
<feature type="chain" id="PRO_0000186381" description="Viral dihydrofolate reductase">
    <location>
        <begin position="1"/>
        <end position="213"/>
    </location>
</feature>
<feature type="domain" description="DHFR" evidence="2">
    <location>
        <begin position="4"/>
        <end position="184"/>
    </location>
</feature>
<feature type="binding site" evidence="1">
    <location>
        <position position="10"/>
    </location>
    <ligand>
        <name>NADP(+)</name>
        <dbReference type="ChEBI" id="CHEBI:58349"/>
    </ligand>
</feature>
<feature type="binding site" evidence="1">
    <location>
        <begin position="16"/>
        <end position="22"/>
    </location>
    <ligand>
        <name>NADP(+)</name>
        <dbReference type="ChEBI" id="CHEBI:58349"/>
    </ligand>
</feature>
<feature type="binding site" evidence="1">
    <location>
        <begin position="31"/>
        <end position="36"/>
    </location>
    <ligand>
        <name>substrate</name>
    </ligand>
</feature>
<feature type="binding site" evidence="1">
    <location>
        <begin position="54"/>
        <end position="56"/>
    </location>
    <ligand>
        <name>NADP(+)</name>
        <dbReference type="ChEBI" id="CHEBI:58349"/>
    </ligand>
</feature>
<feature type="binding site" evidence="1">
    <location>
        <position position="70"/>
    </location>
    <ligand>
        <name>substrate</name>
    </ligand>
</feature>
<feature type="binding site" evidence="1">
    <location>
        <begin position="76"/>
        <end position="78"/>
    </location>
    <ligand>
        <name>NADP(+)</name>
        <dbReference type="ChEBI" id="CHEBI:58349"/>
    </ligand>
</feature>
<feature type="binding site" evidence="1">
    <location>
        <begin position="116"/>
        <end position="123"/>
    </location>
    <ligand>
        <name>NADP(+)</name>
        <dbReference type="ChEBI" id="CHEBI:58349"/>
    </ligand>
</feature>
<proteinExistence type="inferred from homology"/>
<keyword id="KW-0521">NADP</keyword>
<keyword id="KW-0554">One-carbon metabolism</keyword>
<keyword id="KW-0560">Oxidoreductase</keyword>